<accession>B5E3M4</accession>
<name>PLSY_STRP4</name>
<comment type="function">
    <text evidence="1">Catalyzes the transfer of an acyl group from acyl-phosphate (acyl-PO(4)) to glycerol-3-phosphate (G3P) to form lysophosphatidic acid (LPA). This enzyme utilizes acyl-phosphate as fatty acyl donor, but not acyl-CoA or acyl-ACP.</text>
</comment>
<comment type="catalytic activity">
    <reaction evidence="1">
        <text>an acyl phosphate + sn-glycerol 3-phosphate = a 1-acyl-sn-glycero-3-phosphate + phosphate</text>
        <dbReference type="Rhea" id="RHEA:34075"/>
        <dbReference type="ChEBI" id="CHEBI:43474"/>
        <dbReference type="ChEBI" id="CHEBI:57597"/>
        <dbReference type="ChEBI" id="CHEBI:57970"/>
        <dbReference type="ChEBI" id="CHEBI:59918"/>
        <dbReference type="EC" id="2.3.1.275"/>
    </reaction>
</comment>
<comment type="pathway">
    <text evidence="1">Lipid metabolism; phospholipid metabolism.</text>
</comment>
<comment type="subunit">
    <text evidence="1">Probably interacts with PlsX.</text>
</comment>
<comment type="subcellular location">
    <subcellularLocation>
        <location evidence="1">Cell membrane</location>
        <topology evidence="1">Multi-pass membrane protein</topology>
    </subcellularLocation>
</comment>
<comment type="similarity">
    <text evidence="1">Belongs to the PlsY family.</text>
</comment>
<keyword id="KW-1003">Cell membrane</keyword>
<keyword id="KW-0444">Lipid biosynthesis</keyword>
<keyword id="KW-0443">Lipid metabolism</keyword>
<keyword id="KW-0472">Membrane</keyword>
<keyword id="KW-0594">Phospholipid biosynthesis</keyword>
<keyword id="KW-1208">Phospholipid metabolism</keyword>
<keyword id="KW-0808">Transferase</keyword>
<keyword id="KW-0812">Transmembrane</keyword>
<keyword id="KW-1133">Transmembrane helix</keyword>
<sequence length="213" mass="22929">MITIVLLILAYLLGSIPSGLWIGQVFFQINLREHGSGNTGTTNTFRILGKKAGMATFVIDFFKGTLATLLPIIFHLQGVSPLIFGLLAVIGHTFPIFAGFKGGKAVATSAGVIFGFAPIFCLYLAIIFFGALYLGSMISLSSVTASIAAVIGVLLFPLFGFILSNYDSLFIAIILALASLIIIRHKDNIARIKNKTENLVPWGLNLTHQDPKK</sequence>
<evidence type="ECO:0000255" key="1">
    <source>
        <dbReference type="HAMAP-Rule" id="MF_01043"/>
    </source>
</evidence>
<dbReference type="EC" id="2.3.1.275" evidence="1"/>
<dbReference type="EMBL" id="CP001015">
    <property type="protein sequence ID" value="ACF55952.1"/>
    <property type="molecule type" value="Genomic_DNA"/>
</dbReference>
<dbReference type="SMR" id="B5E3M4"/>
<dbReference type="KEGG" id="spx:SPG_0772"/>
<dbReference type="HOGENOM" id="CLU_081254_4_0_9"/>
<dbReference type="UniPathway" id="UPA00085"/>
<dbReference type="GO" id="GO:0005886">
    <property type="term" value="C:plasma membrane"/>
    <property type="evidence" value="ECO:0007669"/>
    <property type="project" value="UniProtKB-SubCell"/>
</dbReference>
<dbReference type="GO" id="GO:0043772">
    <property type="term" value="F:acyl-phosphate glycerol-3-phosphate acyltransferase activity"/>
    <property type="evidence" value="ECO:0007669"/>
    <property type="project" value="UniProtKB-UniRule"/>
</dbReference>
<dbReference type="GO" id="GO:0008654">
    <property type="term" value="P:phospholipid biosynthetic process"/>
    <property type="evidence" value="ECO:0007669"/>
    <property type="project" value="UniProtKB-UniRule"/>
</dbReference>
<dbReference type="HAMAP" id="MF_01043">
    <property type="entry name" value="PlsY"/>
    <property type="match status" value="1"/>
</dbReference>
<dbReference type="InterPro" id="IPR003811">
    <property type="entry name" value="G3P_acylTferase_PlsY"/>
</dbReference>
<dbReference type="NCBIfam" id="TIGR00023">
    <property type="entry name" value="glycerol-3-phosphate 1-O-acyltransferase PlsY"/>
    <property type="match status" value="1"/>
</dbReference>
<dbReference type="PANTHER" id="PTHR30309:SF0">
    <property type="entry name" value="GLYCEROL-3-PHOSPHATE ACYLTRANSFERASE-RELATED"/>
    <property type="match status" value="1"/>
</dbReference>
<dbReference type="PANTHER" id="PTHR30309">
    <property type="entry name" value="INNER MEMBRANE PROTEIN YGIH"/>
    <property type="match status" value="1"/>
</dbReference>
<dbReference type="Pfam" id="PF02660">
    <property type="entry name" value="G3P_acyltransf"/>
    <property type="match status" value="1"/>
</dbReference>
<dbReference type="SMART" id="SM01207">
    <property type="entry name" value="G3P_acyltransf"/>
    <property type="match status" value="1"/>
</dbReference>
<feature type="chain" id="PRO_1000136125" description="Glycerol-3-phosphate acyltransferase">
    <location>
        <begin position="1"/>
        <end position="213"/>
    </location>
</feature>
<feature type="transmembrane region" description="Helical" evidence="1">
    <location>
        <begin position="2"/>
        <end position="22"/>
    </location>
</feature>
<feature type="transmembrane region" description="Helical" evidence="1">
    <location>
        <begin position="52"/>
        <end position="74"/>
    </location>
</feature>
<feature type="transmembrane region" description="Helical" evidence="1">
    <location>
        <begin position="81"/>
        <end position="100"/>
    </location>
</feature>
<feature type="transmembrane region" description="Helical" evidence="1">
    <location>
        <begin position="112"/>
        <end position="132"/>
    </location>
</feature>
<feature type="transmembrane region" description="Helical" evidence="1">
    <location>
        <begin position="143"/>
        <end position="163"/>
    </location>
</feature>
<feature type="transmembrane region" description="Helical" evidence="1">
    <location>
        <begin position="164"/>
        <end position="184"/>
    </location>
</feature>
<proteinExistence type="inferred from homology"/>
<organism>
    <name type="scientific">Streptococcus pneumoniae serotype 19F (strain G54)</name>
    <dbReference type="NCBI Taxonomy" id="512566"/>
    <lineage>
        <taxon>Bacteria</taxon>
        <taxon>Bacillati</taxon>
        <taxon>Bacillota</taxon>
        <taxon>Bacilli</taxon>
        <taxon>Lactobacillales</taxon>
        <taxon>Streptococcaceae</taxon>
        <taxon>Streptococcus</taxon>
    </lineage>
</organism>
<protein>
    <recommendedName>
        <fullName evidence="1">Glycerol-3-phosphate acyltransferase</fullName>
    </recommendedName>
    <alternativeName>
        <fullName evidence="1">Acyl-PO4 G3P acyltransferase</fullName>
    </alternativeName>
    <alternativeName>
        <fullName evidence="1">Acyl-phosphate--glycerol-3-phosphate acyltransferase</fullName>
    </alternativeName>
    <alternativeName>
        <fullName evidence="1">G3P acyltransferase</fullName>
        <shortName evidence="1">GPAT</shortName>
        <ecNumber evidence="1">2.3.1.275</ecNumber>
    </alternativeName>
    <alternativeName>
        <fullName evidence="1">Lysophosphatidic acid synthase</fullName>
        <shortName evidence="1">LPA synthase</shortName>
    </alternativeName>
</protein>
<gene>
    <name evidence="1" type="primary">plsY</name>
    <name type="ordered locus">SPG_0772</name>
</gene>
<reference key="1">
    <citation type="journal article" date="2001" name="Microb. Drug Resist.">
        <title>Annotated draft genomic sequence from a Streptococcus pneumoniae type 19F clinical isolate.</title>
        <authorList>
            <person name="Dopazo J."/>
            <person name="Mendoza A."/>
            <person name="Herrero J."/>
            <person name="Caldara F."/>
            <person name="Humbert Y."/>
            <person name="Friedli L."/>
            <person name="Guerrier M."/>
            <person name="Grand-Schenk E."/>
            <person name="Gandin C."/>
            <person name="de Francesco M."/>
            <person name="Polissi A."/>
            <person name="Buell G."/>
            <person name="Feger G."/>
            <person name="Garcia E."/>
            <person name="Peitsch M."/>
            <person name="Garcia-Bustos J.F."/>
        </authorList>
    </citation>
    <scope>NUCLEOTIDE SEQUENCE [LARGE SCALE GENOMIC DNA]</scope>
    <source>
        <strain>G54</strain>
    </source>
</reference>
<reference key="2">
    <citation type="submission" date="2008-03" db="EMBL/GenBank/DDBJ databases">
        <title>Pneumococcal beta glucoside metabolism investigated by whole genome comparison.</title>
        <authorList>
            <person name="Mulas L."/>
            <person name="Trappetti C."/>
            <person name="Hakenbeck R."/>
            <person name="Iannelli F."/>
            <person name="Pozzi G."/>
            <person name="Davidsen T.M."/>
            <person name="Tettelin H."/>
            <person name="Oggioni M."/>
        </authorList>
    </citation>
    <scope>NUCLEOTIDE SEQUENCE [LARGE SCALE GENOMIC DNA]</scope>
    <source>
        <strain>G54</strain>
    </source>
</reference>